<evidence type="ECO:0000255" key="1">
    <source>
        <dbReference type="HAMAP-Rule" id="MF_00151"/>
    </source>
</evidence>
<accession>Q60CN9</accession>
<dbReference type="EC" id="2.7.7.3" evidence="1"/>
<dbReference type="EMBL" id="AE017282">
    <property type="protein sequence ID" value="AAU90783.1"/>
    <property type="molecule type" value="Genomic_DNA"/>
</dbReference>
<dbReference type="RefSeq" id="WP_010959438.1">
    <property type="nucleotide sequence ID" value="NC_002977.6"/>
</dbReference>
<dbReference type="SMR" id="Q60CN9"/>
<dbReference type="STRING" id="243233.MCA0066"/>
<dbReference type="GeneID" id="88222416"/>
<dbReference type="KEGG" id="mca:MCA0066"/>
<dbReference type="eggNOG" id="COG0669">
    <property type="taxonomic scope" value="Bacteria"/>
</dbReference>
<dbReference type="HOGENOM" id="CLU_100149_0_1_6"/>
<dbReference type="UniPathway" id="UPA00241">
    <property type="reaction ID" value="UER00355"/>
</dbReference>
<dbReference type="Proteomes" id="UP000006821">
    <property type="component" value="Chromosome"/>
</dbReference>
<dbReference type="GO" id="GO:0005737">
    <property type="term" value="C:cytoplasm"/>
    <property type="evidence" value="ECO:0007669"/>
    <property type="project" value="UniProtKB-SubCell"/>
</dbReference>
<dbReference type="GO" id="GO:0005524">
    <property type="term" value="F:ATP binding"/>
    <property type="evidence" value="ECO:0007669"/>
    <property type="project" value="UniProtKB-KW"/>
</dbReference>
<dbReference type="GO" id="GO:0004595">
    <property type="term" value="F:pantetheine-phosphate adenylyltransferase activity"/>
    <property type="evidence" value="ECO:0007669"/>
    <property type="project" value="UniProtKB-UniRule"/>
</dbReference>
<dbReference type="GO" id="GO:0015937">
    <property type="term" value="P:coenzyme A biosynthetic process"/>
    <property type="evidence" value="ECO:0007669"/>
    <property type="project" value="UniProtKB-UniRule"/>
</dbReference>
<dbReference type="CDD" id="cd02163">
    <property type="entry name" value="PPAT"/>
    <property type="match status" value="1"/>
</dbReference>
<dbReference type="Gene3D" id="3.40.50.620">
    <property type="entry name" value="HUPs"/>
    <property type="match status" value="1"/>
</dbReference>
<dbReference type="HAMAP" id="MF_00151">
    <property type="entry name" value="PPAT_bact"/>
    <property type="match status" value="1"/>
</dbReference>
<dbReference type="InterPro" id="IPR004821">
    <property type="entry name" value="Cyt_trans-like"/>
</dbReference>
<dbReference type="InterPro" id="IPR001980">
    <property type="entry name" value="PPAT"/>
</dbReference>
<dbReference type="InterPro" id="IPR014729">
    <property type="entry name" value="Rossmann-like_a/b/a_fold"/>
</dbReference>
<dbReference type="NCBIfam" id="TIGR01510">
    <property type="entry name" value="coaD_prev_kdtB"/>
    <property type="match status" value="1"/>
</dbReference>
<dbReference type="NCBIfam" id="TIGR00125">
    <property type="entry name" value="cyt_tran_rel"/>
    <property type="match status" value="1"/>
</dbReference>
<dbReference type="PANTHER" id="PTHR21342">
    <property type="entry name" value="PHOSPHOPANTETHEINE ADENYLYLTRANSFERASE"/>
    <property type="match status" value="1"/>
</dbReference>
<dbReference type="PANTHER" id="PTHR21342:SF1">
    <property type="entry name" value="PHOSPHOPANTETHEINE ADENYLYLTRANSFERASE"/>
    <property type="match status" value="1"/>
</dbReference>
<dbReference type="Pfam" id="PF01467">
    <property type="entry name" value="CTP_transf_like"/>
    <property type="match status" value="1"/>
</dbReference>
<dbReference type="PRINTS" id="PR01020">
    <property type="entry name" value="LPSBIOSNTHSS"/>
</dbReference>
<dbReference type="SUPFAM" id="SSF52374">
    <property type="entry name" value="Nucleotidylyl transferase"/>
    <property type="match status" value="1"/>
</dbReference>
<protein>
    <recommendedName>
        <fullName evidence="1">Phosphopantetheine adenylyltransferase</fullName>
        <ecNumber evidence="1">2.7.7.3</ecNumber>
    </recommendedName>
    <alternativeName>
        <fullName evidence="1">Dephospho-CoA pyrophosphorylase</fullName>
    </alternativeName>
    <alternativeName>
        <fullName evidence="1">Pantetheine-phosphate adenylyltransferase</fullName>
        <shortName evidence="1">PPAT</shortName>
    </alternativeName>
</protein>
<keyword id="KW-0067">ATP-binding</keyword>
<keyword id="KW-0173">Coenzyme A biosynthesis</keyword>
<keyword id="KW-0963">Cytoplasm</keyword>
<keyword id="KW-0460">Magnesium</keyword>
<keyword id="KW-0547">Nucleotide-binding</keyword>
<keyword id="KW-0548">Nucleotidyltransferase</keyword>
<keyword id="KW-1185">Reference proteome</keyword>
<keyword id="KW-0808">Transferase</keyword>
<name>COAD_METCA</name>
<proteinExistence type="inferred from homology"/>
<reference key="1">
    <citation type="journal article" date="2004" name="PLoS Biol.">
        <title>Genomic insights into methanotrophy: the complete genome sequence of Methylococcus capsulatus (Bath).</title>
        <authorList>
            <person name="Ward N.L."/>
            <person name="Larsen O."/>
            <person name="Sakwa J."/>
            <person name="Bruseth L."/>
            <person name="Khouri H.M."/>
            <person name="Durkin A.S."/>
            <person name="Dimitrov G."/>
            <person name="Jiang L."/>
            <person name="Scanlan D."/>
            <person name="Kang K.H."/>
            <person name="Lewis M.R."/>
            <person name="Nelson K.E."/>
            <person name="Methe B.A."/>
            <person name="Wu M."/>
            <person name="Heidelberg J.F."/>
            <person name="Paulsen I.T."/>
            <person name="Fouts D.E."/>
            <person name="Ravel J."/>
            <person name="Tettelin H."/>
            <person name="Ren Q."/>
            <person name="Read T.D."/>
            <person name="DeBoy R.T."/>
            <person name="Seshadri R."/>
            <person name="Salzberg S.L."/>
            <person name="Jensen H.B."/>
            <person name="Birkeland N.K."/>
            <person name="Nelson W.C."/>
            <person name="Dodson R.J."/>
            <person name="Grindhaug S.H."/>
            <person name="Holt I.E."/>
            <person name="Eidhammer I."/>
            <person name="Jonasen I."/>
            <person name="Vanaken S."/>
            <person name="Utterback T.R."/>
            <person name="Feldblyum T.V."/>
            <person name="Fraser C.M."/>
            <person name="Lillehaug J.R."/>
            <person name="Eisen J.A."/>
        </authorList>
    </citation>
    <scope>NUCLEOTIDE SEQUENCE [LARGE SCALE GENOMIC DNA]</scope>
    <source>
        <strain>ATCC 33009 / NCIMB 11132 / Bath</strain>
    </source>
</reference>
<sequence length="162" mass="17439">MNVTAIYPGTFDPITLGHADLVGRASRIFDRVILAVAESKAKTPLFDFGERLALAREAVAEMPNVEVVGFNSLLVDCARTHGATVILRGLRAVSDFEFEFQMAGMNRSLGPEIETIFLTPGESYAFLSSSVIREIAKFGGDVSAFVPGHVRAALMRKFAGSG</sequence>
<organism>
    <name type="scientific">Methylococcus capsulatus (strain ATCC 33009 / NCIMB 11132 / Bath)</name>
    <dbReference type="NCBI Taxonomy" id="243233"/>
    <lineage>
        <taxon>Bacteria</taxon>
        <taxon>Pseudomonadati</taxon>
        <taxon>Pseudomonadota</taxon>
        <taxon>Gammaproteobacteria</taxon>
        <taxon>Methylococcales</taxon>
        <taxon>Methylococcaceae</taxon>
        <taxon>Methylococcus</taxon>
    </lineage>
</organism>
<feature type="chain" id="PRO_0000156234" description="Phosphopantetheine adenylyltransferase">
    <location>
        <begin position="1"/>
        <end position="162"/>
    </location>
</feature>
<feature type="binding site" evidence="1">
    <location>
        <begin position="10"/>
        <end position="11"/>
    </location>
    <ligand>
        <name>ATP</name>
        <dbReference type="ChEBI" id="CHEBI:30616"/>
    </ligand>
</feature>
<feature type="binding site" evidence="1">
    <location>
        <position position="10"/>
    </location>
    <ligand>
        <name>substrate</name>
    </ligand>
</feature>
<feature type="binding site" evidence="1">
    <location>
        <position position="18"/>
    </location>
    <ligand>
        <name>ATP</name>
        <dbReference type="ChEBI" id="CHEBI:30616"/>
    </ligand>
</feature>
<feature type="binding site" evidence="1">
    <location>
        <position position="42"/>
    </location>
    <ligand>
        <name>substrate</name>
    </ligand>
</feature>
<feature type="binding site" evidence="1">
    <location>
        <position position="74"/>
    </location>
    <ligand>
        <name>substrate</name>
    </ligand>
</feature>
<feature type="binding site" evidence="1">
    <location>
        <position position="88"/>
    </location>
    <ligand>
        <name>substrate</name>
    </ligand>
</feature>
<feature type="binding site" evidence="1">
    <location>
        <begin position="89"/>
        <end position="91"/>
    </location>
    <ligand>
        <name>ATP</name>
        <dbReference type="ChEBI" id="CHEBI:30616"/>
    </ligand>
</feature>
<feature type="binding site" evidence="1">
    <location>
        <position position="99"/>
    </location>
    <ligand>
        <name>ATP</name>
        <dbReference type="ChEBI" id="CHEBI:30616"/>
    </ligand>
</feature>
<feature type="binding site" evidence="1">
    <location>
        <begin position="124"/>
        <end position="130"/>
    </location>
    <ligand>
        <name>ATP</name>
        <dbReference type="ChEBI" id="CHEBI:30616"/>
    </ligand>
</feature>
<feature type="site" description="Transition state stabilizer" evidence="1">
    <location>
        <position position="18"/>
    </location>
</feature>
<comment type="function">
    <text evidence="1">Reversibly transfers an adenylyl group from ATP to 4'-phosphopantetheine, yielding dephospho-CoA (dPCoA) and pyrophosphate.</text>
</comment>
<comment type="catalytic activity">
    <reaction evidence="1">
        <text>(R)-4'-phosphopantetheine + ATP + H(+) = 3'-dephospho-CoA + diphosphate</text>
        <dbReference type="Rhea" id="RHEA:19801"/>
        <dbReference type="ChEBI" id="CHEBI:15378"/>
        <dbReference type="ChEBI" id="CHEBI:30616"/>
        <dbReference type="ChEBI" id="CHEBI:33019"/>
        <dbReference type="ChEBI" id="CHEBI:57328"/>
        <dbReference type="ChEBI" id="CHEBI:61723"/>
        <dbReference type="EC" id="2.7.7.3"/>
    </reaction>
</comment>
<comment type="cofactor">
    <cofactor evidence="1">
        <name>Mg(2+)</name>
        <dbReference type="ChEBI" id="CHEBI:18420"/>
    </cofactor>
</comment>
<comment type="pathway">
    <text evidence="1">Cofactor biosynthesis; coenzyme A biosynthesis; CoA from (R)-pantothenate: step 4/5.</text>
</comment>
<comment type="subunit">
    <text evidence="1">Homohexamer.</text>
</comment>
<comment type="subcellular location">
    <subcellularLocation>
        <location evidence="1">Cytoplasm</location>
    </subcellularLocation>
</comment>
<comment type="similarity">
    <text evidence="1">Belongs to the bacterial CoaD family.</text>
</comment>
<gene>
    <name evidence="1" type="primary">coaD</name>
    <name type="ordered locus">MCA0066</name>
</gene>